<comment type="function">
    <text evidence="1">Catalyzes the formation of S-adenosylmethionine (AdoMet) from methionine and ATP. The overall synthetic reaction is composed of two sequential steps, AdoMet formation and the subsequent tripolyphosphate hydrolysis which occurs prior to release of AdoMet from the enzyme.</text>
</comment>
<comment type="catalytic activity">
    <reaction evidence="1">
        <text>L-methionine + ATP + H2O = S-adenosyl-L-methionine + phosphate + diphosphate</text>
        <dbReference type="Rhea" id="RHEA:21080"/>
        <dbReference type="ChEBI" id="CHEBI:15377"/>
        <dbReference type="ChEBI" id="CHEBI:30616"/>
        <dbReference type="ChEBI" id="CHEBI:33019"/>
        <dbReference type="ChEBI" id="CHEBI:43474"/>
        <dbReference type="ChEBI" id="CHEBI:57844"/>
        <dbReference type="ChEBI" id="CHEBI:59789"/>
        <dbReference type="EC" id="2.5.1.6"/>
    </reaction>
</comment>
<comment type="cofactor">
    <cofactor evidence="1">
        <name>Mg(2+)</name>
        <dbReference type="ChEBI" id="CHEBI:18420"/>
    </cofactor>
    <text evidence="1">Binds 2 divalent ions per subunit.</text>
</comment>
<comment type="cofactor">
    <cofactor evidence="1">
        <name>K(+)</name>
        <dbReference type="ChEBI" id="CHEBI:29103"/>
    </cofactor>
    <text evidence="1">Binds 1 potassium ion per subunit.</text>
</comment>
<comment type="pathway">
    <text evidence="1">Amino-acid biosynthesis; S-adenosyl-L-methionine biosynthesis; S-adenosyl-L-methionine from L-methionine: step 1/1.</text>
</comment>
<comment type="subunit">
    <text evidence="1">Homotetramer; dimer of dimers.</text>
</comment>
<comment type="subcellular location">
    <subcellularLocation>
        <location evidence="1">Cytoplasm</location>
    </subcellularLocation>
</comment>
<comment type="similarity">
    <text evidence="1">Belongs to the AdoMet synthase family.</text>
</comment>
<sequence length="381" mass="41406">MIIHVFTSESVSEGHPDKIADQISDAILDAILAKDPLARVACETFVKTGMVLVGGEITTSAWVDVETITREVIKDIGYNSSDMGFDWASCSVLSAIGKQSLDIAQGVDNRETKILGAGDQGLMFGYASRETDVCMPAPIAYSHRLMARQAELRKNNKLPWLRPDGKCQLTLKYDQGKPVAIDTIVFSTQHAPEISHKDLVEAVREEIIKPVLPEEWLSAATRYYINPTGRFVIGGPLGDCGLTGRKIIVDTYGGMARHGGGCFSGKDPSKVDRSGAYAARHVAKNLVAAGIAEKCEIQVSYAIGVAEPTSISVDTFGTGHLRNNVIIDLIKTHFDLTPQGIIDHHDLFSPIYRQTAAYGHYGRDGLPWERLDKVAALAKAL</sequence>
<keyword id="KW-0067">ATP-binding</keyword>
<keyword id="KW-0963">Cytoplasm</keyword>
<keyword id="KW-0460">Magnesium</keyword>
<keyword id="KW-0479">Metal-binding</keyword>
<keyword id="KW-0547">Nucleotide-binding</keyword>
<keyword id="KW-0554">One-carbon metabolism</keyword>
<keyword id="KW-0630">Potassium</keyword>
<keyword id="KW-0808">Transferase</keyword>
<organism>
    <name type="scientific">Legionella jeonii</name>
    <dbReference type="NCBI Taxonomy" id="2728"/>
    <lineage>
        <taxon>Bacteria</taxon>
        <taxon>Pseudomonadati</taxon>
        <taxon>Pseudomonadota</taxon>
        <taxon>Gammaproteobacteria</taxon>
        <taxon>Legionellales</taxon>
        <taxon>Legionellaceae</taxon>
        <taxon>Legionella</taxon>
    </lineage>
</organism>
<protein>
    <recommendedName>
        <fullName evidence="1">S-adenosylmethionine synthase</fullName>
        <shortName evidence="1">AdoMet synthase</shortName>
        <ecNumber evidence="1">2.5.1.6</ecNumber>
    </recommendedName>
    <alternativeName>
        <fullName evidence="1">MAT</fullName>
    </alternativeName>
    <alternativeName>
        <fullName evidence="1">Methionine adenosyltransferase</fullName>
    </alternativeName>
</protein>
<evidence type="ECO:0000255" key="1">
    <source>
        <dbReference type="HAMAP-Rule" id="MF_00086"/>
    </source>
</evidence>
<feature type="chain" id="PRO_0000174480" description="S-adenosylmethionine synthase">
    <location>
        <begin position="1"/>
        <end position="381"/>
    </location>
</feature>
<feature type="region of interest" description="Flexible loop" evidence="1">
    <location>
        <begin position="99"/>
        <end position="109"/>
    </location>
</feature>
<feature type="binding site" description="in other chain" evidence="1">
    <location>
        <position position="15"/>
    </location>
    <ligand>
        <name>ATP</name>
        <dbReference type="ChEBI" id="CHEBI:30616"/>
        <note>ligand shared between two neighboring subunits</note>
    </ligand>
</feature>
<feature type="binding site" evidence="1">
    <location>
        <position position="17"/>
    </location>
    <ligand>
        <name>Mg(2+)</name>
        <dbReference type="ChEBI" id="CHEBI:18420"/>
    </ligand>
</feature>
<feature type="binding site" evidence="1">
    <location>
        <position position="43"/>
    </location>
    <ligand>
        <name>K(+)</name>
        <dbReference type="ChEBI" id="CHEBI:29103"/>
    </ligand>
</feature>
<feature type="binding site" description="in other chain" evidence="1">
    <location>
        <position position="56"/>
    </location>
    <ligand>
        <name>L-methionine</name>
        <dbReference type="ChEBI" id="CHEBI:57844"/>
        <note>ligand shared between two neighboring subunits</note>
    </ligand>
</feature>
<feature type="binding site" description="in other chain" evidence="1">
    <location>
        <position position="99"/>
    </location>
    <ligand>
        <name>L-methionine</name>
        <dbReference type="ChEBI" id="CHEBI:57844"/>
        <note>ligand shared between two neighboring subunits</note>
    </ligand>
</feature>
<feature type="binding site" description="in other chain" evidence="1">
    <location>
        <begin position="164"/>
        <end position="166"/>
    </location>
    <ligand>
        <name>ATP</name>
        <dbReference type="ChEBI" id="CHEBI:30616"/>
        <note>ligand shared between two neighboring subunits</note>
    </ligand>
</feature>
<feature type="binding site" description="in other chain" evidence="1">
    <location>
        <begin position="230"/>
        <end position="231"/>
    </location>
    <ligand>
        <name>ATP</name>
        <dbReference type="ChEBI" id="CHEBI:30616"/>
        <note>ligand shared between two neighboring subunits</note>
    </ligand>
</feature>
<feature type="binding site" evidence="1">
    <location>
        <position position="239"/>
    </location>
    <ligand>
        <name>ATP</name>
        <dbReference type="ChEBI" id="CHEBI:30616"/>
        <note>ligand shared between two neighboring subunits</note>
    </ligand>
</feature>
<feature type="binding site" evidence="1">
    <location>
        <position position="239"/>
    </location>
    <ligand>
        <name>L-methionine</name>
        <dbReference type="ChEBI" id="CHEBI:57844"/>
        <note>ligand shared between two neighboring subunits</note>
    </ligand>
</feature>
<feature type="binding site" description="in other chain" evidence="1">
    <location>
        <begin position="245"/>
        <end position="246"/>
    </location>
    <ligand>
        <name>ATP</name>
        <dbReference type="ChEBI" id="CHEBI:30616"/>
        <note>ligand shared between two neighboring subunits</note>
    </ligand>
</feature>
<feature type="binding site" evidence="1">
    <location>
        <position position="266"/>
    </location>
    <ligand>
        <name>ATP</name>
        <dbReference type="ChEBI" id="CHEBI:30616"/>
        <note>ligand shared between two neighboring subunits</note>
    </ligand>
</feature>
<feature type="binding site" description="in other chain" evidence="1">
    <location>
        <position position="270"/>
    </location>
    <ligand>
        <name>L-methionine</name>
        <dbReference type="ChEBI" id="CHEBI:57844"/>
        <note>ligand shared between two neighboring subunits</note>
    </ligand>
</feature>
<accession>Q7WYG5</accession>
<reference key="1">
    <citation type="journal article" date="2003" name="J. Eukaryot. Microbiol.">
        <title>Characterization of sams genes of Amoeba proteus and the endosymbiotic X-bacteria.</title>
        <authorList>
            <person name="Jeon T.J."/>
            <person name="Jeon K.W."/>
        </authorList>
    </citation>
    <scope>NUCLEOTIDE SEQUENCE [GENOMIC DNA]</scope>
</reference>
<dbReference type="EC" id="2.5.1.6" evidence="1"/>
<dbReference type="EMBL" id="AY324627">
    <property type="protein sequence ID" value="AAP88975.1"/>
    <property type="molecule type" value="Genomic_DNA"/>
</dbReference>
<dbReference type="SMR" id="Q7WYG5"/>
<dbReference type="UniPathway" id="UPA00315">
    <property type="reaction ID" value="UER00080"/>
</dbReference>
<dbReference type="GO" id="GO:0005737">
    <property type="term" value="C:cytoplasm"/>
    <property type="evidence" value="ECO:0007669"/>
    <property type="project" value="UniProtKB-SubCell"/>
</dbReference>
<dbReference type="GO" id="GO:0005524">
    <property type="term" value="F:ATP binding"/>
    <property type="evidence" value="ECO:0007669"/>
    <property type="project" value="UniProtKB-UniRule"/>
</dbReference>
<dbReference type="GO" id="GO:0000287">
    <property type="term" value="F:magnesium ion binding"/>
    <property type="evidence" value="ECO:0007669"/>
    <property type="project" value="UniProtKB-UniRule"/>
</dbReference>
<dbReference type="GO" id="GO:0004478">
    <property type="term" value="F:methionine adenosyltransferase activity"/>
    <property type="evidence" value="ECO:0007669"/>
    <property type="project" value="UniProtKB-UniRule"/>
</dbReference>
<dbReference type="GO" id="GO:0006730">
    <property type="term" value="P:one-carbon metabolic process"/>
    <property type="evidence" value="ECO:0007669"/>
    <property type="project" value="UniProtKB-KW"/>
</dbReference>
<dbReference type="GO" id="GO:0006556">
    <property type="term" value="P:S-adenosylmethionine biosynthetic process"/>
    <property type="evidence" value="ECO:0007669"/>
    <property type="project" value="UniProtKB-UniRule"/>
</dbReference>
<dbReference type="CDD" id="cd18079">
    <property type="entry name" value="S-AdoMet_synt"/>
    <property type="match status" value="1"/>
</dbReference>
<dbReference type="FunFam" id="3.30.300.10:FF:000003">
    <property type="entry name" value="S-adenosylmethionine synthase"/>
    <property type="match status" value="1"/>
</dbReference>
<dbReference type="Gene3D" id="3.30.300.10">
    <property type="match status" value="3"/>
</dbReference>
<dbReference type="HAMAP" id="MF_00086">
    <property type="entry name" value="S_AdoMet_synth1"/>
    <property type="match status" value="1"/>
</dbReference>
<dbReference type="InterPro" id="IPR022631">
    <property type="entry name" value="ADOMET_SYNTHASE_CS"/>
</dbReference>
<dbReference type="InterPro" id="IPR022630">
    <property type="entry name" value="S-AdoMet_synt_C"/>
</dbReference>
<dbReference type="InterPro" id="IPR022629">
    <property type="entry name" value="S-AdoMet_synt_central"/>
</dbReference>
<dbReference type="InterPro" id="IPR022628">
    <property type="entry name" value="S-AdoMet_synt_N"/>
</dbReference>
<dbReference type="InterPro" id="IPR002133">
    <property type="entry name" value="S-AdoMet_synthetase"/>
</dbReference>
<dbReference type="InterPro" id="IPR022636">
    <property type="entry name" value="S-AdoMet_synthetase_sfam"/>
</dbReference>
<dbReference type="NCBIfam" id="TIGR01034">
    <property type="entry name" value="metK"/>
    <property type="match status" value="1"/>
</dbReference>
<dbReference type="PANTHER" id="PTHR11964">
    <property type="entry name" value="S-ADENOSYLMETHIONINE SYNTHETASE"/>
    <property type="match status" value="1"/>
</dbReference>
<dbReference type="Pfam" id="PF02773">
    <property type="entry name" value="S-AdoMet_synt_C"/>
    <property type="match status" value="1"/>
</dbReference>
<dbReference type="Pfam" id="PF02772">
    <property type="entry name" value="S-AdoMet_synt_M"/>
    <property type="match status" value="1"/>
</dbReference>
<dbReference type="Pfam" id="PF00438">
    <property type="entry name" value="S-AdoMet_synt_N"/>
    <property type="match status" value="1"/>
</dbReference>
<dbReference type="PIRSF" id="PIRSF000497">
    <property type="entry name" value="MAT"/>
    <property type="match status" value="1"/>
</dbReference>
<dbReference type="SUPFAM" id="SSF55973">
    <property type="entry name" value="S-adenosylmethionine synthetase"/>
    <property type="match status" value="3"/>
</dbReference>
<dbReference type="PROSITE" id="PS00376">
    <property type="entry name" value="ADOMET_SYNTHASE_1"/>
    <property type="match status" value="1"/>
</dbReference>
<dbReference type="PROSITE" id="PS00377">
    <property type="entry name" value="ADOMET_SYNTHASE_2"/>
    <property type="match status" value="1"/>
</dbReference>
<name>METK_LEGJE</name>
<gene>
    <name evidence="1" type="primary">metK</name>
    <name type="synonym">samS</name>
</gene>
<proteinExistence type="inferred from homology"/>